<accession>P04175</accession>
<feature type="initiator methionine" description="Removed" evidence="3">
    <location>
        <position position="1"/>
    </location>
</feature>
<feature type="chain" id="PRO_0000167598" description="NADPH--cytochrome P450 reductase">
    <location>
        <begin position="2"/>
        <end position="678"/>
    </location>
</feature>
<feature type="topological domain" description="Lumenal" evidence="2">
    <location>
        <begin position="2"/>
        <end position="22"/>
    </location>
</feature>
<feature type="transmembrane region" description="Helical" evidence="2">
    <location>
        <begin position="23"/>
        <end position="43"/>
    </location>
</feature>
<feature type="topological domain" description="Cytoplasmic" evidence="2">
    <location>
        <begin position="44"/>
        <end position="678"/>
    </location>
</feature>
<feature type="domain" description="Flavodoxin-like" evidence="2">
    <location>
        <begin position="80"/>
        <end position="224"/>
    </location>
</feature>
<feature type="domain" description="FAD-binding FR-type" evidence="2">
    <location>
        <begin position="279"/>
        <end position="521"/>
    </location>
</feature>
<feature type="binding site" evidence="2">
    <location>
        <begin position="86"/>
        <end position="91"/>
    </location>
    <ligand>
        <name>FMN</name>
        <dbReference type="ChEBI" id="CHEBI:58210"/>
    </ligand>
</feature>
<feature type="binding site" evidence="2">
    <location>
        <begin position="138"/>
        <end position="141"/>
    </location>
    <ligand>
        <name>FMN</name>
        <dbReference type="ChEBI" id="CHEBI:58210"/>
    </ligand>
</feature>
<feature type="binding site" evidence="2">
    <location>
        <begin position="173"/>
        <end position="182"/>
    </location>
    <ligand>
        <name>FMN</name>
        <dbReference type="ChEBI" id="CHEBI:58210"/>
    </ligand>
</feature>
<feature type="binding site" evidence="2">
    <location>
        <position position="208"/>
    </location>
    <ligand>
        <name>FMN</name>
        <dbReference type="ChEBI" id="CHEBI:58210"/>
    </ligand>
</feature>
<feature type="binding site" evidence="2">
    <location>
        <position position="298"/>
    </location>
    <ligand>
        <name>NADP(+)</name>
        <dbReference type="ChEBI" id="CHEBI:58349"/>
    </ligand>
</feature>
<feature type="binding site" evidence="2">
    <location>
        <position position="424"/>
    </location>
    <ligand>
        <name>FAD</name>
        <dbReference type="ChEBI" id="CHEBI:57692"/>
    </ligand>
</feature>
<feature type="binding site" evidence="2">
    <location>
        <begin position="454"/>
        <end position="457"/>
    </location>
    <ligand>
        <name>FAD</name>
        <dbReference type="ChEBI" id="CHEBI:57692"/>
    </ligand>
</feature>
<feature type="binding site" evidence="2">
    <location>
        <begin position="472"/>
        <end position="474"/>
    </location>
    <ligand>
        <name>FAD</name>
        <dbReference type="ChEBI" id="CHEBI:57692"/>
    </ligand>
</feature>
<feature type="binding site" evidence="2">
    <location>
        <position position="478"/>
    </location>
    <ligand>
        <name>FAD</name>
        <dbReference type="ChEBI" id="CHEBI:57692"/>
    </ligand>
</feature>
<feature type="binding site" evidence="2">
    <location>
        <begin position="488"/>
        <end position="491"/>
    </location>
    <ligand>
        <name>FAD</name>
        <dbReference type="ChEBI" id="CHEBI:57692"/>
    </ligand>
</feature>
<feature type="binding site" evidence="2">
    <location>
        <position position="535"/>
    </location>
    <ligand>
        <name>NADP(+)</name>
        <dbReference type="ChEBI" id="CHEBI:58349"/>
    </ligand>
</feature>
<feature type="binding site" evidence="2">
    <location>
        <begin position="596"/>
        <end position="597"/>
    </location>
    <ligand>
        <name>NADP(+)</name>
        <dbReference type="ChEBI" id="CHEBI:58349"/>
    </ligand>
</feature>
<feature type="binding site" evidence="2">
    <location>
        <begin position="602"/>
        <end position="606"/>
    </location>
    <ligand>
        <name>NADP(+)</name>
        <dbReference type="ChEBI" id="CHEBI:58349"/>
    </ligand>
</feature>
<feature type="binding site" evidence="2">
    <location>
        <position position="639"/>
    </location>
    <ligand>
        <name>NADP(+)</name>
        <dbReference type="ChEBI" id="CHEBI:58349"/>
    </ligand>
</feature>
<feature type="binding site" evidence="2">
    <location>
        <position position="677"/>
    </location>
    <ligand>
        <name>FAD</name>
        <dbReference type="ChEBI" id="CHEBI:57692"/>
    </ligand>
</feature>
<feature type="modified residue" description="N-acetylglycine" evidence="3">
    <location>
        <position position="2"/>
    </location>
</feature>
<feature type="modified residue" description="Phosphoserine" evidence="1">
    <location>
        <position position="63"/>
    </location>
</feature>
<feature type="sequence conflict" description="In Ref. 1; AAA85368." evidence="4" ref="1">
    <original>S</original>
    <variation>T</variation>
    <location>
        <position position="55"/>
    </location>
</feature>
<feature type="sequence conflict" description="In Ref. 1; AAA85368." evidence="4" ref="1">
    <original>T</original>
    <variation>S</variation>
    <location>
        <position position="164"/>
    </location>
</feature>
<feature type="sequence conflict" description="In Ref. 3; AA sequence." evidence="4" ref="3">
    <original>N</original>
    <variation>D</variation>
    <location>
        <position position="175"/>
    </location>
</feature>
<feature type="sequence conflict" description="In Ref. 3; AA sequence." evidence="4" ref="3">
    <original>T</original>
    <variation>A</variation>
    <location>
        <position position="340"/>
    </location>
</feature>
<feature type="sequence conflict" description="In Ref. 3; AA sequence." evidence="4" ref="3">
    <original>N</original>
    <variation>D</variation>
    <location>
        <position position="379"/>
    </location>
</feature>
<feature type="sequence conflict" description="In Ref. 3; AA sequence." evidence="4" ref="3">
    <original>Q</original>
    <variation>E</variation>
    <location>
        <position position="401"/>
    </location>
</feature>
<feature type="sequence conflict" description="In Ref. 1; AAA85368." evidence="4" ref="1">
    <original>R</original>
    <variation>L</variation>
    <location>
        <position position="447"/>
    </location>
</feature>
<feature type="sequence conflict" description="In Ref. 3; AA sequence." evidence="4" ref="3">
    <original>N</original>
    <variation>D</variation>
    <location>
        <position position="503"/>
    </location>
</feature>
<feature type="sequence conflict" description="In Ref. 2; AA sequence and 3; AA sequence." evidence="4" ref="2 3">
    <original>V</original>
    <variation>L</variation>
    <location>
        <position position="509"/>
    </location>
</feature>
<feature type="sequence conflict" description="In Ref. 3; AA sequence." evidence="4" ref="3">
    <original>D</original>
    <variation>N</variation>
    <location>
        <position position="675"/>
    </location>
</feature>
<dbReference type="EC" id="1.6.2.4" evidence="2"/>
<dbReference type="EMBL" id="L33893">
    <property type="protein sequence ID" value="AAA85368.1"/>
    <property type="molecule type" value="mRNA"/>
</dbReference>
<dbReference type="PIR" id="A25584">
    <property type="entry name" value="RDPGO4"/>
</dbReference>
<dbReference type="RefSeq" id="NP_001123431.1">
    <property type="nucleotide sequence ID" value="NM_001129959.1"/>
</dbReference>
<dbReference type="SMR" id="P04175"/>
<dbReference type="FunCoup" id="P04175">
    <property type="interactions" value="1920"/>
</dbReference>
<dbReference type="STRING" id="9823.ENSSSCP00000036096"/>
<dbReference type="iPTMnet" id="P04175"/>
<dbReference type="PeptideAtlas" id="P04175"/>
<dbReference type="GeneID" id="100170114"/>
<dbReference type="KEGG" id="ssc:100170114"/>
<dbReference type="CTD" id="5447"/>
<dbReference type="InParanoid" id="P04175"/>
<dbReference type="OrthoDB" id="1856718at2759"/>
<dbReference type="Proteomes" id="UP000008227">
    <property type="component" value="Unplaced"/>
</dbReference>
<dbReference type="Proteomes" id="UP000314985">
    <property type="component" value="Unplaced"/>
</dbReference>
<dbReference type="Proteomes" id="UP000694570">
    <property type="component" value="Unplaced"/>
</dbReference>
<dbReference type="Proteomes" id="UP000694571">
    <property type="component" value="Unplaced"/>
</dbReference>
<dbReference type="Proteomes" id="UP000694720">
    <property type="component" value="Unplaced"/>
</dbReference>
<dbReference type="Proteomes" id="UP000694722">
    <property type="component" value="Unplaced"/>
</dbReference>
<dbReference type="Proteomes" id="UP000694723">
    <property type="component" value="Unplaced"/>
</dbReference>
<dbReference type="Proteomes" id="UP000694724">
    <property type="component" value="Unplaced"/>
</dbReference>
<dbReference type="Proteomes" id="UP000694725">
    <property type="component" value="Unplaced"/>
</dbReference>
<dbReference type="Proteomes" id="UP000694726">
    <property type="component" value="Unplaced"/>
</dbReference>
<dbReference type="Proteomes" id="UP000694727">
    <property type="component" value="Unplaced"/>
</dbReference>
<dbReference type="Proteomes" id="UP000694728">
    <property type="component" value="Unplaced"/>
</dbReference>
<dbReference type="GO" id="GO:0005829">
    <property type="term" value="C:cytosol"/>
    <property type="evidence" value="ECO:0000318"/>
    <property type="project" value="GO_Central"/>
</dbReference>
<dbReference type="GO" id="GO:0005789">
    <property type="term" value="C:endoplasmic reticulum membrane"/>
    <property type="evidence" value="ECO:0007669"/>
    <property type="project" value="UniProtKB-SubCell"/>
</dbReference>
<dbReference type="GO" id="GO:0050660">
    <property type="term" value="F:flavin adenine dinucleotide binding"/>
    <property type="evidence" value="ECO:0000318"/>
    <property type="project" value="GO_Central"/>
</dbReference>
<dbReference type="GO" id="GO:0010181">
    <property type="term" value="F:FMN binding"/>
    <property type="evidence" value="ECO:0000318"/>
    <property type="project" value="GO_Central"/>
</dbReference>
<dbReference type="GO" id="GO:0050661">
    <property type="term" value="F:NADP binding"/>
    <property type="evidence" value="ECO:0007669"/>
    <property type="project" value="UniProtKB-UniRule"/>
</dbReference>
<dbReference type="GO" id="GO:0003958">
    <property type="term" value="F:NADPH-hemoprotein reductase activity"/>
    <property type="evidence" value="ECO:0000318"/>
    <property type="project" value="GO_Central"/>
</dbReference>
<dbReference type="GO" id="GO:0006809">
    <property type="term" value="P:nitric oxide biosynthetic process"/>
    <property type="evidence" value="ECO:0000318"/>
    <property type="project" value="GO_Central"/>
</dbReference>
<dbReference type="GO" id="GO:0009725">
    <property type="term" value="P:response to hormone"/>
    <property type="evidence" value="ECO:0000318"/>
    <property type="project" value="GO_Central"/>
</dbReference>
<dbReference type="CDD" id="cd06204">
    <property type="entry name" value="CYPOR"/>
    <property type="match status" value="1"/>
</dbReference>
<dbReference type="FunFam" id="1.20.990.10:FF:000001">
    <property type="entry name" value="NADPH--cytochrome P450 reductase"/>
    <property type="match status" value="1"/>
</dbReference>
<dbReference type="FunFam" id="3.40.50.360:FF:000009">
    <property type="entry name" value="NADPH--cytochrome P450 reductase"/>
    <property type="match status" value="1"/>
</dbReference>
<dbReference type="FunFam" id="3.40.50.80:FF:000001">
    <property type="entry name" value="NADPH--cytochrome P450 reductase 1"/>
    <property type="match status" value="1"/>
</dbReference>
<dbReference type="Gene3D" id="3.40.50.360">
    <property type="match status" value="1"/>
</dbReference>
<dbReference type="Gene3D" id="1.20.990.10">
    <property type="entry name" value="NADPH-cytochrome p450 Reductase, Chain A, domain 3"/>
    <property type="match status" value="1"/>
</dbReference>
<dbReference type="Gene3D" id="3.40.50.80">
    <property type="entry name" value="Nucleotide-binding domain of ferredoxin-NADP reductase (FNR) module"/>
    <property type="match status" value="1"/>
</dbReference>
<dbReference type="Gene3D" id="2.40.30.10">
    <property type="entry name" value="Translation factors"/>
    <property type="match status" value="1"/>
</dbReference>
<dbReference type="HAMAP" id="MF_03212">
    <property type="entry name" value="NCPR"/>
    <property type="match status" value="1"/>
</dbReference>
<dbReference type="InterPro" id="IPR003097">
    <property type="entry name" value="CysJ-like_FAD-binding"/>
</dbReference>
<dbReference type="InterPro" id="IPR017927">
    <property type="entry name" value="FAD-bd_FR_type"/>
</dbReference>
<dbReference type="InterPro" id="IPR001094">
    <property type="entry name" value="Flavdoxin-like"/>
</dbReference>
<dbReference type="InterPro" id="IPR008254">
    <property type="entry name" value="Flavodoxin/NO_synth"/>
</dbReference>
<dbReference type="InterPro" id="IPR001709">
    <property type="entry name" value="Flavoprot_Pyr_Nucl_cyt_Rdtase"/>
</dbReference>
<dbReference type="InterPro" id="IPR029039">
    <property type="entry name" value="Flavoprotein-like_sf"/>
</dbReference>
<dbReference type="InterPro" id="IPR039261">
    <property type="entry name" value="FNR_nucleotide-bd"/>
</dbReference>
<dbReference type="InterPro" id="IPR023173">
    <property type="entry name" value="NADPH_Cyt_P450_Rdtase_alpha"/>
</dbReference>
<dbReference type="InterPro" id="IPR001433">
    <property type="entry name" value="OxRdtase_FAD/NAD-bd"/>
</dbReference>
<dbReference type="InterPro" id="IPR023208">
    <property type="entry name" value="P450R"/>
</dbReference>
<dbReference type="InterPro" id="IPR017938">
    <property type="entry name" value="Riboflavin_synthase-like_b-brl"/>
</dbReference>
<dbReference type="PANTHER" id="PTHR19384:SF17">
    <property type="entry name" value="NADPH--CYTOCHROME P450 REDUCTASE"/>
    <property type="match status" value="1"/>
</dbReference>
<dbReference type="PANTHER" id="PTHR19384">
    <property type="entry name" value="NITRIC OXIDE SYNTHASE-RELATED"/>
    <property type="match status" value="1"/>
</dbReference>
<dbReference type="Pfam" id="PF00667">
    <property type="entry name" value="FAD_binding_1"/>
    <property type="match status" value="1"/>
</dbReference>
<dbReference type="Pfam" id="PF00258">
    <property type="entry name" value="Flavodoxin_1"/>
    <property type="match status" value="1"/>
</dbReference>
<dbReference type="Pfam" id="PF00175">
    <property type="entry name" value="NAD_binding_1"/>
    <property type="match status" value="1"/>
</dbReference>
<dbReference type="PIRSF" id="PIRSF000208">
    <property type="entry name" value="P450R"/>
    <property type="match status" value="1"/>
</dbReference>
<dbReference type="PRINTS" id="PR00369">
    <property type="entry name" value="FLAVODOXIN"/>
</dbReference>
<dbReference type="PRINTS" id="PR00371">
    <property type="entry name" value="FPNCR"/>
</dbReference>
<dbReference type="SUPFAM" id="SSF52343">
    <property type="entry name" value="Ferredoxin reductase-like, C-terminal NADP-linked domain"/>
    <property type="match status" value="1"/>
</dbReference>
<dbReference type="SUPFAM" id="SSF52218">
    <property type="entry name" value="Flavoproteins"/>
    <property type="match status" value="1"/>
</dbReference>
<dbReference type="SUPFAM" id="SSF63380">
    <property type="entry name" value="Riboflavin synthase domain-like"/>
    <property type="match status" value="1"/>
</dbReference>
<dbReference type="PROSITE" id="PS51384">
    <property type="entry name" value="FAD_FR"/>
    <property type="match status" value="1"/>
</dbReference>
<dbReference type="PROSITE" id="PS50902">
    <property type="entry name" value="FLAVODOXIN_LIKE"/>
    <property type="match status" value="1"/>
</dbReference>
<protein>
    <recommendedName>
        <fullName evidence="2">NADPH--cytochrome P450 reductase</fullName>
        <shortName evidence="2">CPR</shortName>
        <shortName evidence="2">P450R</shortName>
        <ecNumber evidence="2">1.6.2.4</ecNumber>
    </recommendedName>
</protein>
<proteinExistence type="evidence at protein level"/>
<name>NCPR_PIG</name>
<keyword id="KW-0007">Acetylation</keyword>
<keyword id="KW-0903">Direct protein sequencing</keyword>
<keyword id="KW-0256">Endoplasmic reticulum</keyword>
<keyword id="KW-0274">FAD</keyword>
<keyword id="KW-0285">Flavoprotein</keyword>
<keyword id="KW-0288">FMN</keyword>
<keyword id="KW-0472">Membrane</keyword>
<keyword id="KW-0521">NADP</keyword>
<keyword id="KW-0560">Oxidoreductase</keyword>
<keyword id="KW-0597">Phosphoprotein</keyword>
<keyword id="KW-1185">Reference proteome</keyword>
<keyword id="KW-0812">Transmembrane</keyword>
<keyword id="KW-1133">Transmembrane helix</keyword>
<reference key="1">
    <citation type="submission" date="1995-06" db="EMBL/GenBank/DDBJ databases">
        <authorList>
            <person name="Amborn J."/>
            <person name="Preiss B."/>
            <person name="Stender B."/>
            <person name="Viale M."/>
            <person name="Repp R.Z."/>
            <person name="Lampert F."/>
            <person name="Kroger M."/>
            <person name="Lumper L."/>
        </authorList>
    </citation>
    <scope>NUCLEOTIDE SEQUENCE [MRNA]</scope>
</reference>
<reference key="2">
    <citation type="journal article" date="1986" name="Biochemistry">
        <title>Complete amino acid sequence of NADPH-cytochrome P-450 reductase from porcine hepatic microsomes.</title>
        <authorList>
            <person name="Haniu M."/>
            <person name="Iyanagi T."/>
            <person name="Miller P."/>
            <person name="Lee T.D."/>
            <person name="Shively J.E."/>
        </authorList>
    </citation>
    <scope>PROTEIN SEQUENCE OF 2-678</scope>
    <scope>ACETYLATION AT GLY-2</scope>
</reference>
<reference key="3">
    <citation type="journal article" date="1986" name="Biochem. J.">
        <title>Complete structure of the hydrophilic domain in the porcine NADPH-cytochrome P-450 reductase.</title>
        <authorList>
            <person name="Vogel F."/>
            <person name="Lumper L."/>
        </authorList>
    </citation>
    <scope>PROTEIN SEQUENCE OF 57-678</scope>
</reference>
<evidence type="ECO:0000250" key="1">
    <source>
        <dbReference type="UniProtKB" id="P16435"/>
    </source>
</evidence>
<evidence type="ECO:0000255" key="2">
    <source>
        <dbReference type="HAMAP-Rule" id="MF_03212"/>
    </source>
</evidence>
<evidence type="ECO:0000269" key="3">
    <source>
    </source>
</evidence>
<evidence type="ECO:0000305" key="4"/>
<sequence length="678" mass="76833">MGDSNVDTGTTTSEMVAEEVSLFSATDMVLFSLIVGLLTYWFIFRKKKDEVPEFSKIETTTSSVKDSSFVEKMKKTGRNIIVFYGSQTGTAEEFANRLSKDAHRYGMRGMAADPEEYDLSDLSSLPEIENALAVFCMATYGEGDPTDNAQDFYDWLQEADVDLTGVKYAVFGLGNKTYEHFNAMGKYVDKRLEQLGAQRIFDLGLGDDDGNLEEDFITWREQFWPAVCEHFGVEATGEESSIRQYELVVHTDMDTAVVYTGEMGRLKSYENQKPPFDAKNPFLAVVTTNRKLNQGTERHLMHLELDISDSKIRYESGDHVAVYPANDSALVNQLGEILGTDLDIVMSLNNLDEESNKRHPFPCPTTYRTALTYYLDITNPPRTNVLYELAQYASEPSEQEQLRKMASSSGEGKELYLSWVVEARRHILAILQDYPSLRPPIDHLCERLPRLQARYYSIASSSKVHPNSVHICAVVVEYETKSGRVNKGVATSWLRAKEPAGENGRRALVPMFVRKSQFRLPFKATTPVIMVGPGTGVAPFIGFIQERAWLQEQGKEVGETLLYYGCRRSDEDYLYREELAQFHAKGALTRLSVAFSREQPQKVYVQHLLKRDKEHLWKLIHDGGAHIYICGDARNMARDVQNTFCDIVAEQGPMEHAQAVDYVKKLMTKGRYSLDVWS</sequence>
<organism>
    <name type="scientific">Sus scrofa</name>
    <name type="common">Pig</name>
    <dbReference type="NCBI Taxonomy" id="9823"/>
    <lineage>
        <taxon>Eukaryota</taxon>
        <taxon>Metazoa</taxon>
        <taxon>Chordata</taxon>
        <taxon>Craniata</taxon>
        <taxon>Vertebrata</taxon>
        <taxon>Euteleostomi</taxon>
        <taxon>Mammalia</taxon>
        <taxon>Eutheria</taxon>
        <taxon>Laurasiatheria</taxon>
        <taxon>Artiodactyla</taxon>
        <taxon>Suina</taxon>
        <taxon>Suidae</taxon>
        <taxon>Sus</taxon>
    </lineage>
</organism>
<gene>
    <name evidence="2" type="primary">POR</name>
</gene>
<comment type="function">
    <text evidence="2">This enzyme is required for electron transfer from NADP to cytochrome P450 in microsomes. It can also provide electron transfer to heme oxygenase and cytochrome B5.</text>
</comment>
<comment type="catalytic activity">
    <reaction evidence="2">
        <text>2 oxidized [cytochrome P450] + NADPH = 2 reduced [cytochrome P450] + NADP(+) + H(+)</text>
        <dbReference type="Rhea" id="RHEA:24040"/>
        <dbReference type="Rhea" id="RHEA-COMP:14627"/>
        <dbReference type="Rhea" id="RHEA-COMP:14628"/>
        <dbReference type="ChEBI" id="CHEBI:15378"/>
        <dbReference type="ChEBI" id="CHEBI:55376"/>
        <dbReference type="ChEBI" id="CHEBI:57783"/>
        <dbReference type="ChEBI" id="CHEBI:58349"/>
        <dbReference type="ChEBI" id="CHEBI:60344"/>
        <dbReference type="EC" id="1.6.2.4"/>
    </reaction>
</comment>
<comment type="cofactor">
    <cofactor evidence="2">
        <name>FAD</name>
        <dbReference type="ChEBI" id="CHEBI:57692"/>
    </cofactor>
    <text evidence="2">Binds 1 FAD per monomer.</text>
</comment>
<comment type="cofactor">
    <cofactor evidence="2">
        <name>FMN</name>
        <dbReference type="ChEBI" id="CHEBI:58210"/>
    </cofactor>
    <text evidence="2">Binds 1 FMN per monomer.</text>
</comment>
<comment type="subcellular location">
    <subcellularLocation>
        <location evidence="2">Endoplasmic reticulum membrane</location>
        <topology evidence="2">Single-pass membrane protein</topology>
        <orientation evidence="2">Cytoplasmic side</orientation>
    </subcellularLocation>
</comment>
<comment type="similarity">
    <text evidence="2">Belongs to the NADPH--cytochrome P450 reductase family.</text>
</comment>
<comment type="similarity">
    <text evidence="2">In the N-terminal section; belongs to the flavodoxin family.</text>
</comment>
<comment type="similarity">
    <text evidence="2">In the C-terminal section; belongs to the flavoprotein pyridine nucleotide cytochrome reductase family.</text>
</comment>